<gene>
    <name type="primary">30</name>
</gene>
<evidence type="ECO:0000255" key="1">
    <source>
        <dbReference type="PROSITE-ProRule" id="PRU00257"/>
    </source>
</evidence>
<dbReference type="EMBL" id="X13065">
    <property type="protein sequence ID" value="CAA31472.1"/>
    <property type="molecule type" value="Genomic_DNA"/>
</dbReference>
<dbReference type="PIR" id="S04829">
    <property type="entry name" value="S04829"/>
</dbReference>
<dbReference type="RefSeq" id="YP_007947969.1">
    <property type="nucleotide sequence ID" value="NC_021190.1"/>
</dbReference>
<dbReference type="SMR" id="P14816"/>
<dbReference type="KEGG" id="vg:24366480"/>
<dbReference type="OrthoDB" id="34899at10239"/>
<dbReference type="GO" id="GO:0003677">
    <property type="term" value="F:DNA binding"/>
    <property type="evidence" value="ECO:0007669"/>
    <property type="project" value="UniProtKB-KW"/>
</dbReference>
<dbReference type="CDD" id="cd00093">
    <property type="entry name" value="HTH_XRE"/>
    <property type="match status" value="1"/>
</dbReference>
<dbReference type="Gene3D" id="1.10.260.40">
    <property type="entry name" value="lambda repressor-like DNA-binding domains"/>
    <property type="match status" value="1"/>
</dbReference>
<dbReference type="InterPro" id="IPR001387">
    <property type="entry name" value="Cro/C1-type_HTH"/>
</dbReference>
<dbReference type="InterPro" id="IPR010982">
    <property type="entry name" value="Lambda_DNA-bd_dom_sf"/>
</dbReference>
<dbReference type="Pfam" id="PF01381">
    <property type="entry name" value="HTH_3"/>
    <property type="match status" value="1"/>
</dbReference>
<dbReference type="SUPFAM" id="SSF47413">
    <property type="entry name" value="lambda repressor-like DNA-binding domains"/>
    <property type="match status" value="1"/>
</dbReference>
<dbReference type="PROSITE" id="PS50943">
    <property type="entry name" value="HTH_CROC1"/>
    <property type="match status" value="1"/>
</dbReference>
<reference key="1">
    <citation type="journal article" date="1988" name="J. Mol. Biol.">
        <title>Organization of the early region of bacteriophage phi 80. Genes and proteins.</title>
        <authorList>
            <person name="Ogawa T."/>
            <person name="Ogawa H."/>
            <person name="Tomizawa J."/>
        </authorList>
    </citation>
    <scope>NUCLEOTIDE SEQUENCE [GENOMIC DNA]</scope>
</reference>
<protein>
    <recommendedName>
        <fullName>Gene 30 protein</fullName>
    </recommendedName>
</protein>
<organismHost>
    <name type="scientific">Escherichia coli</name>
    <dbReference type="NCBI Taxonomy" id="562"/>
</organismHost>
<feature type="chain" id="PRO_0000149708" description="Gene 30 protein">
    <location>
        <begin position="1"/>
        <end position="73"/>
    </location>
</feature>
<feature type="domain" description="HTH cro/C1-type" evidence="1">
    <location>
        <begin position="12"/>
        <end position="66"/>
    </location>
</feature>
<feature type="DNA-binding region" description="H-T-H motif" evidence="1">
    <location>
        <begin position="23"/>
        <end position="42"/>
    </location>
</feature>
<organism>
    <name type="scientific">Enterobacteria phage phi80</name>
    <name type="common">Bacteriophage phi-80</name>
    <dbReference type="NCBI Taxonomy" id="10713"/>
    <lineage>
        <taxon>Viruses</taxon>
        <taxon>Duplodnaviria</taxon>
        <taxon>Heunggongvirae</taxon>
        <taxon>Uroviricota</taxon>
        <taxon>Caudoviricetes</taxon>
    </lineage>
</organism>
<keyword id="KW-0238">DNA-binding</keyword>
<keyword id="KW-0244">Early protein</keyword>
<keyword id="KW-0678">Repressor</keyword>
<keyword id="KW-0804">Transcription</keyword>
<keyword id="KW-0805">Transcription regulation</keyword>
<sequence length="73" mass="7826">MINKKSNASTPLEKAINAVGGSQKVLAEKVGVTPQAINMLKKRGGSLPVTKMRKYEEVTGLPREVLYPGIFAA</sequence>
<accession>P14816</accession>
<name>VG30_BPPH8</name>
<proteinExistence type="predicted"/>